<protein>
    <recommendedName>
        <fullName evidence="1">Orotidine 5'-phosphate decarboxylase</fullName>
        <ecNumber evidence="1">4.1.1.23</ecNumber>
    </recommendedName>
    <alternativeName>
        <fullName evidence="1">OMP decarboxylase</fullName>
        <shortName evidence="1">OMPDCase</shortName>
        <shortName evidence="1">OMPdecase</shortName>
    </alternativeName>
</protein>
<comment type="catalytic activity">
    <reaction evidence="1">
        <text>orotidine 5'-phosphate + H(+) = UMP + CO2</text>
        <dbReference type="Rhea" id="RHEA:11596"/>
        <dbReference type="ChEBI" id="CHEBI:15378"/>
        <dbReference type="ChEBI" id="CHEBI:16526"/>
        <dbReference type="ChEBI" id="CHEBI:57538"/>
        <dbReference type="ChEBI" id="CHEBI:57865"/>
        <dbReference type="EC" id="4.1.1.23"/>
    </reaction>
</comment>
<comment type="pathway">
    <text evidence="1">Pyrimidine metabolism; UMP biosynthesis via de novo pathway; UMP from orotate: step 2/2.</text>
</comment>
<comment type="similarity">
    <text evidence="1">Belongs to the OMP decarboxylase family. Type 2 subfamily.</text>
</comment>
<reference key="1">
    <citation type="journal article" date="2006" name="Nat. Biotechnol.">
        <title>The genome and transcriptomes of the anti-tumor agent Clostridium novyi-NT.</title>
        <authorList>
            <person name="Bettegowda C."/>
            <person name="Huang X."/>
            <person name="Lin J."/>
            <person name="Cheong I."/>
            <person name="Kohli M."/>
            <person name="Szabo S.A."/>
            <person name="Zhang X."/>
            <person name="Diaz L.A. Jr."/>
            <person name="Velculescu V.E."/>
            <person name="Parmigiani G."/>
            <person name="Kinzler K.W."/>
            <person name="Vogelstein B."/>
            <person name="Zhou S."/>
        </authorList>
    </citation>
    <scope>NUCLEOTIDE SEQUENCE [LARGE SCALE GENOMIC DNA]</scope>
    <source>
        <strain>NT</strain>
    </source>
</reference>
<evidence type="ECO:0000255" key="1">
    <source>
        <dbReference type="HAMAP-Rule" id="MF_01215"/>
    </source>
</evidence>
<accession>A0Q2N3</accession>
<name>PYRF_CLONN</name>
<dbReference type="EC" id="4.1.1.23" evidence="1"/>
<dbReference type="EMBL" id="CP000382">
    <property type="protein sequence ID" value="ABK62436.1"/>
    <property type="molecule type" value="Genomic_DNA"/>
</dbReference>
<dbReference type="SMR" id="A0Q2N3"/>
<dbReference type="STRING" id="386415.NT01CX_0393"/>
<dbReference type="KEGG" id="cno:NT01CX_0393"/>
<dbReference type="eggNOG" id="COG0284">
    <property type="taxonomic scope" value="Bacteria"/>
</dbReference>
<dbReference type="HOGENOM" id="CLU_060704_1_1_9"/>
<dbReference type="UniPathway" id="UPA00070">
    <property type="reaction ID" value="UER00120"/>
</dbReference>
<dbReference type="Proteomes" id="UP000008220">
    <property type="component" value="Chromosome"/>
</dbReference>
<dbReference type="GO" id="GO:0004590">
    <property type="term" value="F:orotidine-5'-phosphate decarboxylase activity"/>
    <property type="evidence" value="ECO:0007669"/>
    <property type="project" value="UniProtKB-UniRule"/>
</dbReference>
<dbReference type="GO" id="GO:0006207">
    <property type="term" value="P:'de novo' pyrimidine nucleobase biosynthetic process"/>
    <property type="evidence" value="ECO:0007669"/>
    <property type="project" value="InterPro"/>
</dbReference>
<dbReference type="GO" id="GO:0044205">
    <property type="term" value="P:'de novo' UMP biosynthetic process"/>
    <property type="evidence" value="ECO:0007669"/>
    <property type="project" value="UniProtKB-UniRule"/>
</dbReference>
<dbReference type="CDD" id="cd04725">
    <property type="entry name" value="OMP_decarboxylase_like"/>
    <property type="match status" value="1"/>
</dbReference>
<dbReference type="FunFam" id="3.20.20.70:FF:000246">
    <property type="entry name" value="Orotidine 5'-phosphate decarboxylase"/>
    <property type="match status" value="1"/>
</dbReference>
<dbReference type="Gene3D" id="3.20.20.70">
    <property type="entry name" value="Aldolase class I"/>
    <property type="match status" value="1"/>
</dbReference>
<dbReference type="HAMAP" id="MF_01215">
    <property type="entry name" value="OMPdecase_type2"/>
    <property type="match status" value="1"/>
</dbReference>
<dbReference type="InterPro" id="IPR013785">
    <property type="entry name" value="Aldolase_TIM"/>
</dbReference>
<dbReference type="InterPro" id="IPR011995">
    <property type="entry name" value="OMPdecase_type-2"/>
</dbReference>
<dbReference type="InterPro" id="IPR001754">
    <property type="entry name" value="OMPdeCOase_dom"/>
</dbReference>
<dbReference type="InterPro" id="IPR011060">
    <property type="entry name" value="RibuloseP-bd_barrel"/>
</dbReference>
<dbReference type="NCBIfam" id="TIGR02127">
    <property type="entry name" value="pyrF_sub2"/>
    <property type="match status" value="1"/>
</dbReference>
<dbReference type="PANTHER" id="PTHR43375">
    <property type="entry name" value="OROTIDINE 5'-PHOSPHATE DECARBOXYLASE"/>
    <property type="match status" value="1"/>
</dbReference>
<dbReference type="PANTHER" id="PTHR43375:SF1">
    <property type="entry name" value="OROTIDINE 5'-PHOSPHATE DECARBOXYLASE"/>
    <property type="match status" value="1"/>
</dbReference>
<dbReference type="Pfam" id="PF00215">
    <property type="entry name" value="OMPdecase"/>
    <property type="match status" value="1"/>
</dbReference>
<dbReference type="SMART" id="SM00934">
    <property type="entry name" value="OMPdecase"/>
    <property type="match status" value="1"/>
</dbReference>
<dbReference type="SUPFAM" id="SSF51366">
    <property type="entry name" value="Ribulose-phoshate binding barrel"/>
    <property type="match status" value="1"/>
</dbReference>
<keyword id="KW-0210">Decarboxylase</keyword>
<keyword id="KW-0456">Lyase</keyword>
<keyword id="KW-0665">Pyrimidine biosynthesis</keyword>
<keyword id="KW-1185">Reference proteome</keyword>
<organism>
    <name type="scientific">Clostridium novyi (strain NT)</name>
    <dbReference type="NCBI Taxonomy" id="386415"/>
    <lineage>
        <taxon>Bacteria</taxon>
        <taxon>Bacillati</taxon>
        <taxon>Bacillota</taxon>
        <taxon>Clostridia</taxon>
        <taxon>Eubacteriales</taxon>
        <taxon>Clostridiaceae</taxon>
        <taxon>Clostridium</taxon>
    </lineage>
</organism>
<sequence length="287" mass="32269">MVLIIDRLYEEVNKKGNVCVGLDTDLSYIPQRFLKNYENIEDAIFQFNRKIIDATHDAVACYKVQIAYYESFGLKGLMAYKRTLEYIKKVGCIAISDVKRGDISKTAEMYAKAHFEGDFETDFITVNPYMGMDSIEPYMPYLQNKEKGLFALVRTSNPGSKDFEYIQSGSGRRVYEIVGEKLERLGEKVMGQCGYSSIGGVVGCTTLEDGKEIRKNFGKTFFLIPGFGAQGGGAKEANVYLKDGNGGVVNSSRGILLAYKKYENGEKNFDECSRKEVLKMQKELGRE</sequence>
<proteinExistence type="inferred from homology"/>
<feature type="chain" id="PRO_1000066464" description="Orotidine 5'-phosphate decarboxylase">
    <location>
        <begin position="1"/>
        <end position="287"/>
    </location>
</feature>
<feature type="active site" description="Proton donor" evidence="1">
    <location>
        <position position="99"/>
    </location>
</feature>
<gene>
    <name evidence="1" type="primary">pyrF</name>
    <name type="ordered locus">NT01CX_0393</name>
</gene>